<organism>
    <name type="scientific">Thermotoga sp. (strain RQ2)</name>
    <dbReference type="NCBI Taxonomy" id="126740"/>
    <lineage>
        <taxon>Bacteria</taxon>
        <taxon>Thermotogati</taxon>
        <taxon>Thermotogota</taxon>
        <taxon>Thermotogae</taxon>
        <taxon>Thermotogales</taxon>
        <taxon>Thermotogaceae</taxon>
        <taxon>Thermotoga</taxon>
    </lineage>
</organism>
<accession>B1L8R5</accession>
<comment type="function">
    <text evidence="1">Ligates lysine onto the cytidine present at position 34 of the AUA codon-specific tRNA(Ile) that contains the anticodon CAU, in an ATP-dependent manner. Cytidine is converted to lysidine, thus changing the amino acid specificity of the tRNA from methionine to isoleucine.</text>
</comment>
<comment type="catalytic activity">
    <reaction evidence="1">
        <text>cytidine(34) in tRNA(Ile2) + L-lysine + ATP = lysidine(34) in tRNA(Ile2) + AMP + diphosphate + H(+)</text>
        <dbReference type="Rhea" id="RHEA:43744"/>
        <dbReference type="Rhea" id="RHEA-COMP:10625"/>
        <dbReference type="Rhea" id="RHEA-COMP:10670"/>
        <dbReference type="ChEBI" id="CHEBI:15378"/>
        <dbReference type="ChEBI" id="CHEBI:30616"/>
        <dbReference type="ChEBI" id="CHEBI:32551"/>
        <dbReference type="ChEBI" id="CHEBI:33019"/>
        <dbReference type="ChEBI" id="CHEBI:82748"/>
        <dbReference type="ChEBI" id="CHEBI:83665"/>
        <dbReference type="ChEBI" id="CHEBI:456215"/>
        <dbReference type="EC" id="6.3.4.19"/>
    </reaction>
</comment>
<comment type="subcellular location">
    <subcellularLocation>
        <location evidence="1">Cytoplasm</location>
    </subcellularLocation>
</comment>
<comment type="domain">
    <text>The N-terminal region contains the highly conserved SGGXDS motif, predicted to be a P-loop motif involved in ATP binding.</text>
</comment>
<comment type="similarity">
    <text evidence="1">Belongs to the tRNA(Ile)-lysidine synthase family.</text>
</comment>
<keyword id="KW-0067">ATP-binding</keyword>
<keyword id="KW-0963">Cytoplasm</keyword>
<keyword id="KW-0436">Ligase</keyword>
<keyword id="KW-0547">Nucleotide-binding</keyword>
<keyword id="KW-0819">tRNA processing</keyword>
<evidence type="ECO:0000255" key="1">
    <source>
        <dbReference type="HAMAP-Rule" id="MF_01161"/>
    </source>
</evidence>
<sequence length="414" mass="48827">MLEEGEHVLVAVSGGIDSMTLLYVLRKFSPLLKIKITAAHLDHRIRESSRRDREFVERICRQWNIPVETSEVDVPSLWKDSGKTLEEIAREVRYDFLKRTAKKVGASKIALAHHKNDLLETVVHRLIRGTGPLGLACISPKREEFIRPFLVFKRSEIEEYAREKGVPYVVDETNYDVKYTRNFIRHRIVPLMKELNPTVEDAVYRLVSVTHLLRNFVERTVQDFVERNVYFYKDYAVFVEPEDLFLFLEVTRWVLKEMYGRVPEYEKLIGTLKSKRVEFWSGIFVERSFGYVAVGKTVFKKKYRVEVKGDMLEMEGFKIRVVNNRNDMKFWVRNRKEGDRIIVNGRERKLKDVFIEKKVPTFYRDRVPLLVDEEDRVLWVPGIARSDFLPEDVVVELLEYPVGYVKGGTYFEQV</sequence>
<protein>
    <recommendedName>
        <fullName evidence="1">tRNA(Ile)-lysidine synthase</fullName>
        <ecNumber evidence="1">6.3.4.19</ecNumber>
    </recommendedName>
    <alternativeName>
        <fullName evidence="1">tRNA(Ile)-2-lysyl-cytidine synthase</fullName>
    </alternativeName>
    <alternativeName>
        <fullName evidence="1">tRNA(Ile)-lysidine synthetase</fullName>
    </alternativeName>
</protein>
<proteinExistence type="inferred from homology"/>
<reference key="1">
    <citation type="journal article" date="2011" name="J. Bacteriol.">
        <title>Genome sequence of Thermotoga sp. strain RQ2, a hyperthermophilic bacterium isolated from a geothermally heated region of the seafloor near Ribeira Quente, the Azores.</title>
        <authorList>
            <person name="Swithers K.S."/>
            <person name="DiPippo J.L."/>
            <person name="Bruce D.C."/>
            <person name="Detter C."/>
            <person name="Tapia R."/>
            <person name="Han S."/>
            <person name="Saunders E."/>
            <person name="Goodwin L.A."/>
            <person name="Han J."/>
            <person name="Woyke T."/>
            <person name="Pitluck S."/>
            <person name="Pennacchio L."/>
            <person name="Nolan M."/>
            <person name="Mikhailova N."/>
            <person name="Lykidis A."/>
            <person name="Land M.L."/>
            <person name="Brettin T."/>
            <person name="Stetter K.O."/>
            <person name="Nelson K.E."/>
            <person name="Gogarten J.P."/>
            <person name="Noll K.M."/>
        </authorList>
    </citation>
    <scope>NUCLEOTIDE SEQUENCE [LARGE SCALE GENOMIC DNA]</scope>
    <source>
        <strain>RQ2</strain>
    </source>
</reference>
<gene>
    <name evidence="1" type="primary">tilS</name>
    <name type="ordered locus">TRQ2_0357</name>
</gene>
<name>TILS_THESQ</name>
<feature type="chain" id="PRO_1000137883" description="tRNA(Ile)-lysidine synthase">
    <location>
        <begin position="1"/>
        <end position="414"/>
    </location>
</feature>
<feature type="binding site" evidence="1">
    <location>
        <begin position="13"/>
        <end position="18"/>
    </location>
    <ligand>
        <name>ATP</name>
        <dbReference type="ChEBI" id="CHEBI:30616"/>
    </ligand>
</feature>
<dbReference type="EC" id="6.3.4.19" evidence="1"/>
<dbReference type="EMBL" id="CP000969">
    <property type="protein sequence ID" value="ACB08713.1"/>
    <property type="molecule type" value="Genomic_DNA"/>
</dbReference>
<dbReference type="RefSeq" id="WP_012310495.1">
    <property type="nucleotide sequence ID" value="NC_010483.1"/>
</dbReference>
<dbReference type="SMR" id="B1L8R5"/>
<dbReference type="KEGG" id="trq:TRQ2_0357"/>
<dbReference type="HOGENOM" id="CLU_018869_0_1_0"/>
<dbReference type="Proteomes" id="UP000001687">
    <property type="component" value="Chromosome"/>
</dbReference>
<dbReference type="GO" id="GO:0005737">
    <property type="term" value="C:cytoplasm"/>
    <property type="evidence" value="ECO:0007669"/>
    <property type="project" value="UniProtKB-SubCell"/>
</dbReference>
<dbReference type="GO" id="GO:0005524">
    <property type="term" value="F:ATP binding"/>
    <property type="evidence" value="ECO:0007669"/>
    <property type="project" value="UniProtKB-UniRule"/>
</dbReference>
<dbReference type="GO" id="GO:0032267">
    <property type="term" value="F:tRNA(Ile)-lysidine synthase activity"/>
    <property type="evidence" value="ECO:0007669"/>
    <property type="project" value="UniProtKB-EC"/>
</dbReference>
<dbReference type="GO" id="GO:0006400">
    <property type="term" value="P:tRNA modification"/>
    <property type="evidence" value="ECO:0007669"/>
    <property type="project" value="UniProtKB-UniRule"/>
</dbReference>
<dbReference type="CDD" id="cd01992">
    <property type="entry name" value="TilS_N"/>
    <property type="match status" value="1"/>
</dbReference>
<dbReference type="Gene3D" id="3.40.50.620">
    <property type="entry name" value="HUPs"/>
    <property type="match status" value="1"/>
</dbReference>
<dbReference type="HAMAP" id="MF_01161">
    <property type="entry name" value="tRNA_Ile_lys_synt"/>
    <property type="match status" value="1"/>
</dbReference>
<dbReference type="InterPro" id="IPR012796">
    <property type="entry name" value="Lysidine-tRNA-synth_C"/>
</dbReference>
<dbReference type="InterPro" id="IPR014729">
    <property type="entry name" value="Rossmann-like_a/b/a_fold"/>
</dbReference>
<dbReference type="InterPro" id="IPR011063">
    <property type="entry name" value="TilS/TtcA_N"/>
</dbReference>
<dbReference type="InterPro" id="IPR012094">
    <property type="entry name" value="tRNA_Ile_lys_synt"/>
</dbReference>
<dbReference type="InterPro" id="IPR012795">
    <property type="entry name" value="tRNA_Ile_lys_synt_N"/>
</dbReference>
<dbReference type="NCBIfam" id="TIGR02433">
    <property type="entry name" value="lysidine_TilS_C"/>
    <property type="match status" value="1"/>
</dbReference>
<dbReference type="NCBIfam" id="TIGR02432">
    <property type="entry name" value="lysidine_TilS_N"/>
    <property type="match status" value="1"/>
</dbReference>
<dbReference type="PANTHER" id="PTHR43033">
    <property type="entry name" value="TRNA(ILE)-LYSIDINE SYNTHASE-RELATED"/>
    <property type="match status" value="1"/>
</dbReference>
<dbReference type="PANTHER" id="PTHR43033:SF1">
    <property type="entry name" value="TRNA(ILE)-LYSIDINE SYNTHASE-RELATED"/>
    <property type="match status" value="1"/>
</dbReference>
<dbReference type="Pfam" id="PF01171">
    <property type="entry name" value="ATP_bind_3"/>
    <property type="match status" value="1"/>
</dbReference>
<dbReference type="Pfam" id="PF11734">
    <property type="entry name" value="TilS_C"/>
    <property type="match status" value="1"/>
</dbReference>
<dbReference type="SMART" id="SM00977">
    <property type="entry name" value="TilS_C"/>
    <property type="match status" value="1"/>
</dbReference>
<dbReference type="SUPFAM" id="SSF52402">
    <property type="entry name" value="Adenine nucleotide alpha hydrolases-like"/>
    <property type="match status" value="1"/>
</dbReference>
<dbReference type="SUPFAM" id="SSF56037">
    <property type="entry name" value="PheT/TilS domain"/>
    <property type="match status" value="1"/>
</dbReference>